<gene>
    <name type="primary">ZDS1</name>
    <name type="synonym">CES1</name>
    <name type="synonym">CKM1</name>
    <name type="synonym">HST1</name>
    <name type="synonym">NRC1</name>
    <name type="synonym">OSS1</name>
    <name type="synonym">STM2</name>
    <name type="ordered locus">YMR273C</name>
    <name type="ORF">YM8156.15C</name>
</gene>
<protein>
    <recommendedName>
        <fullName>Protein ZDS1</fullName>
    </recommendedName>
    <alternativeName>
        <fullName>Protein NRC1</fullName>
    </alternativeName>
    <alternativeName>
        <fullName>RT2GS1</fullName>
    </alternativeName>
</protein>
<feature type="chain" id="PRO_0000066569" description="Protein ZDS1">
    <location>
        <begin position="1"/>
        <end position="915"/>
    </location>
</feature>
<feature type="region of interest" description="Disordered" evidence="1">
    <location>
        <begin position="1"/>
        <end position="28"/>
    </location>
</feature>
<feature type="region of interest" description="Disordered" evidence="1">
    <location>
        <begin position="69"/>
        <end position="134"/>
    </location>
</feature>
<feature type="region of interest" description="Disordered" evidence="1">
    <location>
        <begin position="179"/>
        <end position="261"/>
    </location>
</feature>
<feature type="region of interest" description="Disordered" evidence="1">
    <location>
        <begin position="310"/>
        <end position="330"/>
    </location>
</feature>
<feature type="region of interest" description="Disordered" evidence="1">
    <location>
        <begin position="412"/>
        <end position="433"/>
    </location>
</feature>
<feature type="region of interest" description="Disordered" evidence="1">
    <location>
        <begin position="464"/>
        <end position="807"/>
    </location>
</feature>
<feature type="compositionally biased region" description="Low complexity" evidence="1">
    <location>
        <begin position="74"/>
        <end position="93"/>
    </location>
</feature>
<feature type="compositionally biased region" description="Polar residues" evidence="1">
    <location>
        <begin position="115"/>
        <end position="125"/>
    </location>
</feature>
<feature type="compositionally biased region" description="Basic and acidic residues" evidence="1">
    <location>
        <begin position="202"/>
        <end position="212"/>
    </location>
</feature>
<feature type="compositionally biased region" description="Acidic residues" evidence="1">
    <location>
        <begin position="243"/>
        <end position="252"/>
    </location>
</feature>
<feature type="compositionally biased region" description="Basic and acidic residues" evidence="1">
    <location>
        <begin position="313"/>
        <end position="327"/>
    </location>
</feature>
<feature type="compositionally biased region" description="Basic and acidic residues" evidence="1">
    <location>
        <begin position="464"/>
        <end position="480"/>
    </location>
</feature>
<feature type="compositionally biased region" description="Acidic residues" evidence="1">
    <location>
        <begin position="515"/>
        <end position="530"/>
    </location>
</feature>
<feature type="compositionally biased region" description="Basic and acidic residues" evidence="1">
    <location>
        <begin position="531"/>
        <end position="541"/>
    </location>
</feature>
<feature type="compositionally biased region" description="Basic and acidic residues" evidence="1">
    <location>
        <begin position="552"/>
        <end position="562"/>
    </location>
</feature>
<feature type="compositionally biased region" description="Low complexity" evidence="1">
    <location>
        <begin position="565"/>
        <end position="574"/>
    </location>
</feature>
<feature type="compositionally biased region" description="Low complexity" evidence="1">
    <location>
        <begin position="597"/>
        <end position="609"/>
    </location>
</feature>
<feature type="compositionally biased region" description="Basic residues" evidence="1">
    <location>
        <begin position="618"/>
        <end position="627"/>
    </location>
</feature>
<feature type="compositionally biased region" description="Basic residues" evidence="1">
    <location>
        <begin position="642"/>
        <end position="656"/>
    </location>
</feature>
<feature type="compositionally biased region" description="Low complexity" evidence="1">
    <location>
        <begin position="668"/>
        <end position="679"/>
    </location>
</feature>
<feature type="compositionally biased region" description="Polar residues" evidence="1">
    <location>
        <begin position="696"/>
        <end position="710"/>
    </location>
</feature>
<feature type="compositionally biased region" description="Basic and acidic residues" evidence="1">
    <location>
        <begin position="711"/>
        <end position="721"/>
    </location>
</feature>
<feature type="compositionally biased region" description="Basic and acidic residues" evidence="1">
    <location>
        <begin position="742"/>
        <end position="751"/>
    </location>
</feature>
<feature type="compositionally biased region" description="Polar residues" evidence="1">
    <location>
        <begin position="752"/>
        <end position="793"/>
    </location>
</feature>
<feature type="modified residue" description="Phosphoserine" evidence="8">
    <location>
        <position position="229"/>
    </location>
</feature>
<feature type="sequence conflict" description="In Ref. 5." evidence="7" ref="5">
    <original>S</original>
    <variation>P</variation>
    <location>
        <position position="84"/>
    </location>
</feature>
<feature type="sequence conflict" description="In Ref. 2; AAA74626." evidence="7" ref="2">
    <original>D</original>
    <variation>E</variation>
    <location>
        <position position="393"/>
    </location>
</feature>
<feature type="sequence conflict" description="In Ref. 2; AAA74626." evidence="7" ref="2">
    <original>S</original>
    <variation>C</variation>
    <location>
        <position position="413"/>
    </location>
</feature>
<reference key="1">
    <citation type="journal article" date="1996" name="Mol. Cell. Biol.">
        <title>ZDS1 and ZDS2, genes whose products may regulate Cdc42p in Saccharomyces cerevisiae.</title>
        <authorList>
            <person name="Bi E."/>
            <person name="Pringle J.R."/>
        </authorList>
    </citation>
    <scope>NUCLEOTIDE SEQUENCE [GENOMIC DNA]</scope>
    <scope>SUBCELLULAR LOCATION</scope>
</reference>
<reference key="2">
    <citation type="journal article" date="1996" name="Gene Expr.">
        <title>Multicopy suppressors of temperature-sensitive mutations of yeast mRNA capping enzyme.</title>
        <authorList>
            <person name="Schwer B."/>
            <person name="Shuman S."/>
        </authorList>
    </citation>
    <scope>NUCLEOTIDE SEQUENCE [GENOMIC DNA]</scope>
</reference>
<reference key="3">
    <citation type="journal article" date="1996" name="Genes Dev.">
        <title>A search for proteins that interact genetically with histone H3 and H4 amino termini uncovers novel regulators of the Swe1 kinase in Saccharomyces cerevisiae.</title>
        <authorList>
            <person name="Ma X.-J."/>
            <person name="Lu Q."/>
            <person name="Grunstein M."/>
        </authorList>
    </citation>
    <scope>NUCLEOTIDE SEQUENCE [GENOMIC DNA]</scope>
</reference>
<reference key="4">
    <citation type="submission" date="1996-08" db="EMBL/GenBank/DDBJ databases">
        <title>RTG2S1 over expression suppresses mrtg2-5 in the CIT2 retrograde pathway in yeast.</title>
        <authorList>
            <person name="Jia Y."/>
            <person name="Li J.-P."/>
            <person name="Butow R.A."/>
        </authorList>
    </citation>
    <scope>NUCLEOTIDE SEQUENCE [GENOMIC DNA]</scope>
    <source>
        <strain>COP161U7</strain>
    </source>
</reference>
<reference key="5">
    <citation type="submission" date="1994-08" db="UniProtKB">
        <authorList>
            <person name="Linder P."/>
        </authorList>
    </citation>
    <scope>NUCLEOTIDE SEQUENCE [GENOMIC DNA]</scope>
</reference>
<reference key="6">
    <citation type="journal article" date="1996" name="Gene">
        <title>The Saccharomyces cerevisiae SSD1 gene is involved in the tolerance to high concentration of Ca2+ with the participation of HST1/NRC1/BFR1.</title>
        <authorList>
            <person name="Tsuchiya E."/>
            <person name="Matsuzaki G."/>
            <person name="Kurano K."/>
            <person name="Fukuchi T."/>
            <person name="Tsukao A."/>
            <person name="Miyakawa T."/>
        </authorList>
    </citation>
    <scope>NUCLEOTIDE SEQUENCE [GENOMIC DNA]</scope>
    <source>
        <strain>RAY-3A</strain>
    </source>
</reference>
<reference key="7">
    <citation type="journal article" date="1997" name="Nature">
        <title>The nucleotide sequence of Saccharomyces cerevisiae chromosome XIII.</title>
        <authorList>
            <person name="Bowman S."/>
            <person name="Churcher C.M."/>
            <person name="Badcock K."/>
            <person name="Brown D."/>
            <person name="Chillingworth T."/>
            <person name="Connor R."/>
            <person name="Dedman K."/>
            <person name="Devlin K."/>
            <person name="Gentles S."/>
            <person name="Hamlin N."/>
            <person name="Hunt S."/>
            <person name="Jagels K."/>
            <person name="Lye G."/>
            <person name="Moule S."/>
            <person name="Odell C."/>
            <person name="Pearson D."/>
            <person name="Rajandream M.A."/>
            <person name="Rice P."/>
            <person name="Skelton J."/>
            <person name="Walsh S.V."/>
            <person name="Whitehead S."/>
            <person name="Barrell B.G."/>
        </authorList>
    </citation>
    <scope>NUCLEOTIDE SEQUENCE [LARGE SCALE GENOMIC DNA]</scope>
    <source>
        <strain>ATCC 204508 / S288c</strain>
    </source>
</reference>
<reference key="8">
    <citation type="journal article" date="2014" name="G3 (Bethesda)">
        <title>The reference genome sequence of Saccharomyces cerevisiae: Then and now.</title>
        <authorList>
            <person name="Engel S.R."/>
            <person name="Dietrich F.S."/>
            <person name="Fisk D.G."/>
            <person name="Binkley G."/>
            <person name="Balakrishnan R."/>
            <person name="Costanzo M.C."/>
            <person name="Dwight S.S."/>
            <person name="Hitz B.C."/>
            <person name="Karra K."/>
            <person name="Nash R.S."/>
            <person name="Weng S."/>
            <person name="Wong E.D."/>
            <person name="Lloyd P."/>
            <person name="Skrzypek M.S."/>
            <person name="Miyasato S.R."/>
            <person name="Simison M."/>
            <person name="Cherry J.M."/>
        </authorList>
    </citation>
    <scope>GENOME REANNOTATION</scope>
    <source>
        <strain>ATCC 204508 / S288c</strain>
    </source>
</reference>
<reference key="9">
    <citation type="journal article" date="2001" name="J. Cell Biol.">
        <title>A protein interaction map for cell polarity development.</title>
        <authorList>
            <person name="Drees B.L."/>
            <person name="Sundin B.A."/>
            <person name="Brazeau E."/>
            <person name="Caviston J.P."/>
            <person name="Chen G.-C."/>
            <person name="Guo W."/>
            <person name="Kozminski K.G."/>
            <person name="Lau M.W."/>
            <person name="Moskow J.J."/>
            <person name="Tong A."/>
            <person name="Schenkman L.R."/>
            <person name="McKenzie A. III"/>
            <person name="Brennwald P.J."/>
            <person name="Longtine M."/>
            <person name="Bi E."/>
            <person name="Chan C."/>
            <person name="Novick P."/>
            <person name="Boone C."/>
            <person name="Pringle J.R."/>
            <person name="Davis T.N."/>
            <person name="Fields S."/>
            <person name="Drubin D.G."/>
        </authorList>
    </citation>
    <scope>INTERACTION WITH SKG6</scope>
</reference>
<reference key="10">
    <citation type="journal article" date="2001" name="Mol. Cell. Biol.">
        <title>Nucleocytoplasmic distribution of budding yeast protein kinase A regulatory subunit Bcy1 requires Zds1 and is regulated by Yak1-dependent phosphorylation of its targeting domain.</title>
        <authorList>
            <person name="Griffioen G."/>
            <person name="Branduardi P."/>
            <person name="Ballarini A."/>
            <person name="Anghileri P."/>
            <person name="Norbeck J."/>
            <person name="Baroni M.D."/>
            <person name="Ruis H."/>
        </authorList>
    </citation>
    <scope>INTERACTION WITH BCY1</scope>
</reference>
<reference key="11">
    <citation type="journal article" date="2003" name="J. Biol. Chem.">
        <title>Feedback inhibition on cell wall integrity signaling by Zds1 involves Gsk3 phosphorylation of a cAMP-dependent protein kinase regulatory subunit.</title>
        <authorList>
            <person name="Griffioen G."/>
            <person name="Swinnen S."/>
            <person name="Thevelein J.M."/>
        </authorList>
    </citation>
    <scope>FUNCTION</scope>
</reference>
<reference key="12">
    <citation type="journal article" date="2003" name="Nature">
        <title>Global analysis of protein expression in yeast.</title>
        <authorList>
            <person name="Ghaemmaghami S."/>
            <person name="Huh W.-K."/>
            <person name="Bower K."/>
            <person name="Howson R.W."/>
            <person name="Belle A."/>
            <person name="Dephoure N."/>
            <person name="O'Shea E.K."/>
            <person name="Weissman J.S."/>
        </authorList>
    </citation>
    <scope>LEVEL OF PROTEIN EXPRESSION [LARGE SCALE ANALYSIS]</scope>
</reference>
<reference key="13">
    <citation type="journal article" date="2005" name="Genetics">
        <title>Pkc1 acts through Zds1 and Gic1 to suppress growth and cell polarity defects of a yeast eIF5A mutant.</title>
        <authorList>
            <person name="Zanelli C.F."/>
            <person name="Valentini S.R."/>
        </authorList>
    </citation>
    <scope>FUNCTION</scope>
</reference>
<reference key="14">
    <citation type="journal article" date="2005" name="J. Biol. Chem.">
        <title>Physical and genetic interactions link the yeast protein Zds1p with mRNA nuclear export.</title>
        <authorList>
            <person name="Estruch F."/>
            <person name="Hodge C.A."/>
            <person name="Rodriguez-Navarro S."/>
            <person name="Cole C.N."/>
        </authorList>
    </citation>
    <scope>FUNCTION IN MRNA EXPORT</scope>
    <scope>INTERACTION WITH DBP5 AND GFD1</scope>
</reference>
<reference key="15">
    <citation type="journal article" date="2007" name="J. Proteome Res.">
        <title>Large-scale phosphorylation analysis of alpha-factor-arrested Saccharomyces cerevisiae.</title>
        <authorList>
            <person name="Li X."/>
            <person name="Gerber S.A."/>
            <person name="Rudner A.D."/>
            <person name="Beausoleil S.A."/>
            <person name="Haas W."/>
            <person name="Villen J."/>
            <person name="Elias J.E."/>
            <person name="Gygi S.P."/>
        </authorList>
    </citation>
    <scope>PHOSPHORYLATION [LARGE SCALE ANALYSIS] AT SER-229</scope>
    <scope>IDENTIFICATION BY MASS SPECTROMETRY [LARGE SCALE ANALYSIS]</scope>
    <source>
        <strain>ADR376</strain>
    </source>
</reference>
<reference key="16">
    <citation type="journal article" date="2007" name="Proc. Natl. Acad. Sci. U.S.A.">
        <title>Analysis of phosphorylation sites on proteins from Saccharomyces cerevisiae by electron transfer dissociation (ETD) mass spectrometry.</title>
        <authorList>
            <person name="Chi A."/>
            <person name="Huttenhower C."/>
            <person name="Geer L.Y."/>
            <person name="Coon J.J."/>
            <person name="Syka J.E.P."/>
            <person name="Bai D.L."/>
            <person name="Shabanowitz J."/>
            <person name="Burke D.J."/>
            <person name="Troyanskaya O.G."/>
            <person name="Hunt D.F."/>
        </authorList>
    </citation>
    <scope>IDENTIFICATION BY MASS SPECTROMETRY [LARGE SCALE ANALYSIS]</scope>
</reference>
<reference key="17">
    <citation type="journal article" date="2009" name="Science">
        <title>Global analysis of Cdk1 substrate phosphorylation sites provides insights into evolution.</title>
        <authorList>
            <person name="Holt L.J."/>
            <person name="Tuch B.B."/>
            <person name="Villen J."/>
            <person name="Johnson A.D."/>
            <person name="Gygi S.P."/>
            <person name="Morgan D.O."/>
        </authorList>
    </citation>
    <scope>IDENTIFICATION BY MASS SPECTROMETRY [LARGE SCALE ANALYSIS]</scope>
</reference>
<keyword id="KW-0961">Cell wall biogenesis/degradation</keyword>
<keyword id="KW-0963">Cytoplasm</keyword>
<keyword id="KW-0509">mRNA transport</keyword>
<keyword id="KW-0597">Phosphoprotein</keyword>
<keyword id="KW-1185">Reference proteome</keyword>
<keyword id="KW-0813">Transport</keyword>
<name>ZDS1_YEAST</name>
<evidence type="ECO:0000256" key="1">
    <source>
        <dbReference type="SAM" id="MobiDB-lite"/>
    </source>
</evidence>
<evidence type="ECO:0000269" key="2">
    <source>
    </source>
</evidence>
<evidence type="ECO:0000269" key="3">
    <source>
    </source>
</evidence>
<evidence type="ECO:0000269" key="4">
    <source>
    </source>
</evidence>
<evidence type="ECO:0000269" key="5">
    <source>
    </source>
</evidence>
<evidence type="ECO:0000269" key="6">
    <source>
    </source>
</evidence>
<evidence type="ECO:0000305" key="7"/>
<evidence type="ECO:0007744" key="8">
    <source>
    </source>
</evidence>
<proteinExistence type="evidence at protein level"/>
<dbReference type="EMBL" id="L42821">
    <property type="protein sequence ID" value="AAB38423.1"/>
    <property type="molecule type" value="Genomic_DNA"/>
</dbReference>
<dbReference type="EMBL" id="U32580">
    <property type="protein sequence ID" value="AAA74626.1"/>
    <property type="molecule type" value="Genomic_DNA"/>
</dbReference>
<dbReference type="EMBL" id="U63849">
    <property type="protein sequence ID" value="AAB49281.1"/>
    <property type="molecule type" value="Genomic_DNA"/>
</dbReference>
<dbReference type="EMBL" id="U65682">
    <property type="protein sequence ID" value="AAB06617.1"/>
    <property type="molecule type" value="Genomic_DNA"/>
</dbReference>
<dbReference type="EMBL" id="D50276">
    <property type="protein sequence ID" value="BAA08819.1"/>
    <property type="molecule type" value="Genomic_DNA"/>
</dbReference>
<dbReference type="EMBL" id="Z49260">
    <property type="protein sequence ID" value="CAA89256.1"/>
    <property type="molecule type" value="Genomic_DNA"/>
</dbReference>
<dbReference type="EMBL" id="BK006946">
    <property type="protein sequence ID" value="DAA10174.1"/>
    <property type="molecule type" value="Genomic_DNA"/>
</dbReference>
<dbReference type="PIR" id="S54485">
    <property type="entry name" value="S54485"/>
</dbReference>
<dbReference type="RefSeq" id="NP_014000.1">
    <property type="nucleotide sequence ID" value="NM_001182780.1"/>
</dbReference>
<dbReference type="SMR" id="P50111"/>
<dbReference type="BioGRID" id="35452">
    <property type="interactions" value="194"/>
</dbReference>
<dbReference type="DIP" id="DIP-5774N"/>
<dbReference type="FunCoup" id="P50111">
    <property type="interactions" value="198"/>
</dbReference>
<dbReference type="IntAct" id="P50111">
    <property type="interactions" value="23"/>
</dbReference>
<dbReference type="MINT" id="P50111"/>
<dbReference type="STRING" id="4932.YMR273C"/>
<dbReference type="iPTMnet" id="P50111"/>
<dbReference type="PaxDb" id="4932-YMR273C"/>
<dbReference type="PeptideAtlas" id="P50111"/>
<dbReference type="EnsemblFungi" id="YMR273C_mRNA">
    <property type="protein sequence ID" value="YMR273C"/>
    <property type="gene ID" value="YMR273C"/>
</dbReference>
<dbReference type="GeneID" id="855316"/>
<dbReference type="KEGG" id="sce:YMR273C"/>
<dbReference type="AGR" id="SGD:S000004886"/>
<dbReference type="SGD" id="S000004886">
    <property type="gene designation" value="ZDS1"/>
</dbReference>
<dbReference type="VEuPathDB" id="FungiDB:YMR273C"/>
<dbReference type="eggNOG" id="ENOG502S5WJ">
    <property type="taxonomic scope" value="Eukaryota"/>
</dbReference>
<dbReference type="GeneTree" id="ENSGT00940000176802"/>
<dbReference type="HOGENOM" id="CLU_011999_0_0_1"/>
<dbReference type="InParanoid" id="P50111"/>
<dbReference type="OMA" id="INNTMTW"/>
<dbReference type="OrthoDB" id="5589766at2759"/>
<dbReference type="BioCyc" id="YEAST:G3O-32944-MONOMER"/>
<dbReference type="BioGRID-ORCS" id="855316">
    <property type="hits" value="5 hits in 10 CRISPR screens"/>
</dbReference>
<dbReference type="PRO" id="PR:P50111"/>
<dbReference type="Proteomes" id="UP000002311">
    <property type="component" value="Chromosome XIII"/>
</dbReference>
<dbReference type="RNAct" id="P50111">
    <property type="molecule type" value="protein"/>
</dbReference>
<dbReference type="GO" id="GO:0005935">
    <property type="term" value="C:cellular bud neck"/>
    <property type="evidence" value="ECO:0000314"/>
    <property type="project" value="SGD"/>
</dbReference>
<dbReference type="GO" id="GO:0005934">
    <property type="term" value="C:cellular bud tip"/>
    <property type="evidence" value="ECO:0000314"/>
    <property type="project" value="SGD"/>
</dbReference>
<dbReference type="GO" id="GO:0005737">
    <property type="term" value="C:cytoplasm"/>
    <property type="evidence" value="ECO:0000314"/>
    <property type="project" value="SGD"/>
</dbReference>
<dbReference type="GO" id="GO:0000131">
    <property type="term" value="C:incipient cellular bud site"/>
    <property type="evidence" value="ECO:0000314"/>
    <property type="project" value="SGD"/>
</dbReference>
<dbReference type="GO" id="GO:0004864">
    <property type="term" value="F:protein phosphatase inhibitor activity"/>
    <property type="evidence" value="ECO:0000315"/>
    <property type="project" value="SGD"/>
</dbReference>
<dbReference type="GO" id="GO:0071555">
    <property type="term" value="P:cell wall organization"/>
    <property type="evidence" value="ECO:0007669"/>
    <property type="project" value="UniProtKB-KW"/>
</dbReference>
<dbReference type="GO" id="GO:0030010">
    <property type="term" value="P:establishment of cell polarity"/>
    <property type="evidence" value="ECO:0000315"/>
    <property type="project" value="SGD"/>
</dbReference>
<dbReference type="GO" id="GO:0031507">
    <property type="term" value="P:heterochromatin formation"/>
    <property type="evidence" value="ECO:0000315"/>
    <property type="project" value="SGD"/>
</dbReference>
<dbReference type="GO" id="GO:0006406">
    <property type="term" value="P:mRNA export from nucleus"/>
    <property type="evidence" value="ECO:0000315"/>
    <property type="project" value="SGD"/>
</dbReference>
<dbReference type="GO" id="GO:0010971">
    <property type="term" value="P:positive regulation of G2/M transition of mitotic cell cycle"/>
    <property type="evidence" value="ECO:0000315"/>
    <property type="project" value="SGD"/>
</dbReference>
<dbReference type="GO" id="GO:0032880">
    <property type="term" value="P:regulation of protein localization"/>
    <property type="evidence" value="ECO:0000315"/>
    <property type="project" value="SGD"/>
</dbReference>
<dbReference type="InterPro" id="IPR040206">
    <property type="entry name" value="Zds1/2"/>
</dbReference>
<dbReference type="InterPro" id="IPR013941">
    <property type="entry name" value="ZDS1_C"/>
</dbReference>
<dbReference type="PANTHER" id="PTHR28089">
    <property type="entry name" value="PROTEIN ZDS1-RELATED"/>
    <property type="match status" value="1"/>
</dbReference>
<dbReference type="PANTHER" id="PTHR28089:SF1">
    <property type="entry name" value="PROTEIN ZDS1-RELATED"/>
    <property type="match status" value="1"/>
</dbReference>
<dbReference type="Pfam" id="PF08632">
    <property type="entry name" value="Zds_C"/>
    <property type="match status" value="1"/>
</dbReference>
<dbReference type="SMART" id="SM01327">
    <property type="entry name" value="Zds_C"/>
    <property type="match status" value="1"/>
</dbReference>
<comment type="function">
    <text>Has a role in establishing cell polarity. Together with cAMP-dependent protein kinase regulatory subunit BCY1, provides a negative feedback control on the cell wall integrity-signaling pathway by acting as a negative regulator of MAP kinase SLT2/MPK1. In heat-stressed cells appears to play a role in localizing BCY1 to the cytoplasm. Seems to interact with, and down-regulate, CDC42. Also acts as a suppressor of PKC1. May act as an integration point for distinct signaling pathways helping to maintain a balance among these different pathways.</text>
</comment>
<comment type="function">
    <text>When associated with DBP5, GFD1 and nucleoporins at the cytosolic fibrils of the nuclear pore complex, is required for mRNA export form the nucleus.</text>
</comment>
<comment type="subunit">
    <text evidence="2 3 5">Interacts with BCY1, DBP5, GFD1 and SKG6.</text>
</comment>
<comment type="interaction">
    <interactant intactId="EBI-29626">
        <id>P50111</id>
    </interactant>
    <interactant intactId="EBI-5617">
        <id>P20449</id>
        <label>DBP5</label>
    </interactant>
    <organismsDiffer>false</organismsDiffer>
    <experiments>3</experiments>
</comment>
<comment type="interaction">
    <interactant intactId="EBI-29626">
        <id>P50111</id>
    </interactant>
    <interactant intactId="EBI-27549">
        <id>Q04839</id>
        <label>GFD1</label>
    </interactant>
    <organismsDiffer>false</organismsDiffer>
    <experiments>3</experiments>
</comment>
<comment type="subcellular location">
    <subcellularLocation>
        <location evidence="6">Cytoplasm</location>
    </subcellularLocation>
    <text>Concentrated at incipient bud site of unbudded cells and at the bud tip of small and medium-sized buds.</text>
</comment>
<comment type="miscellaneous">
    <text>'ZDS' means 'zillion different screens' as both ZDS1 and ZDS2 have been found by a wide variety of genetic screens.</text>
</comment>
<comment type="miscellaneous">
    <text evidence="4">Present with 279 molecules/cell in log phase SD medium.</text>
</comment>
<comment type="similarity">
    <text evidence="7">To yeast ZDS2/MCS1.</text>
</comment>
<organism>
    <name type="scientific">Saccharomyces cerevisiae (strain ATCC 204508 / S288c)</name>
    <name type="common">Baker's yeast</name>
    <dbReference type="NCBI Taxonomy" id="559292"/>
    <lineage>
        <taxon>Eukaryota</taxon>
        <taxon>Fungi</taxon>
        <taxon>Dikarya</taxon>
        <taxon>Ascomycota</taxon>
        <taxon>Saccharomycotina</taxon>
        <taxon>Saccharomycetes</taxon>
        <taxon>Saccharomycetales</taxon>
        <taxon>Saccharomycetaceae</taxon>
        <taxon>Saccharomyces</taxon>
    </lineage>
</organism>
<accession>P50111</accession>
<accession>D6W0A0</accession>
<accession>P41373</accession>
<sequence>MSNRDNESMLRTTSSDKAIASQRDKRKSEVLIAAQSLDNEIRSVKNLKRLSIGSMDLLIDPELDIKFGGESSGRRSWSGTTSSSASMPSDTTTVNNTRYSDPTPLENLHGRGNSGIESSNKTKQGNYLGIKKGVHSPSRKLNANVLKKNLLWVPANQHPNVKPDNFLELVQDTLQNIQLSDNGEDNDGNSNENNDIEDNGEDKESQSYENKENNTINLNRGLSRHGNASLIRRPSTLRRSYTEFDDNEDDDNKGDSASETVNKVEERISKIKERPVSLRDITEELTKISNSAGLTDNDAITLARTLSMAGSYSDKKDQPQPEGHYDEGDIGFSTSQANTLDDGEFASNMPINNTMTWPERSSLRRSRFNTYRIRSQEQEKEVEQSVDEMKNDDEERLKLTKNTIKVEIDPHKSPFRQQDEDSENMSSPGSIGDFQDIYNHYRQSSGEWEQEMGIEKEAEEVPVKVRNDTVEQDLELREGTTDMVKPSATDDNKETKRHRRRNGWTWLNNKMSREDDNEENQGDDENEENVDSQRMELDNSKKHYISLFNGGEKTEVSNKEEMNNSSTSTATSQTRQKIEKTFANLFRRKPHHKHDASSSPSSSPSSSPSIPNNDAVHVRVRKSKKLGNKSGREPVEPIVLRNRPRPHRHHHSRHGSQKISVKTLKDSQPQQQIPLQPQLEGAIEIEKKEESDSESLPQLQPAVSVSSTKSNSRDREEEEAKKKNKKRSNTTEISNQQHSKHVQKENTDEQKAQLQAPAQEQVQTSVPVQASAPVQNSAPVQTSAPVEASAQTQAPAAPPLKHTSILPPRKLTFADVKKPDKPNSPVQFTDSAFGFPLPLLTVSTVIMFDHRLPINVERAIYRLSHLKLSNSKRGLREQVLLSNFMYAYLNLVNHTLYMEQVAHDKEQQQQQQQQP</sequence>